<proteinExistence type="inferred from homology"/>
<organism>
    <name type="scientific">Dictyostelium discoideum</name>
    <name type="common">Social amoeba</name>
    <dbReference type="NCBI Taxonomy" id="44689"/>
    <lineage>
        <taxon>Eukaryota</taxon>
        <taxon>Amoebozoa</taxon>
        <taxon>Evosea</taxon>
        <taxon>Eumycetozoa</taxon>
        <taxon>Dictyostelia</taxon>
        <taxon>Dictyosteliales</taxon>
        <taxon>Dictyosteliaceae</taxon>
        <taxon>Dictyostelium</taxon>
    </lineage>
</organism>
<feature type="chain" id="PRO_0000312855" description="Glucose-6-phosphate 1-dehydrogenase">
    <location>
        <begin position="1"/>
        <end position="497"/>
    </location>
</feature>
<feature type="active site" description="Proton acceptor" evidence="1">
    <location>
        <position position="243"/>
    </location>
</feature>
<feature type="binding site" evidence="2">
    <location>
        <begin position="17"/>
        <end position="24"/>
    </location>
    <ligand>
        <name>NADP(+)</name>
        <dbReference type="ChEBI" id="CHEBI:58349"/>
        <label>1</label>
    </ligand>
</feature>
<feature type="binding site" evidence="2">
    <location>
        <position position="51"/>
    </location>
    <ligand>
        <name>NADP(+)</name>
        <dbReference type="ChEBI" id="CHEBI:58349"/>
        <label>1</label>
    </ligand>
</feature>
<feature type="binding site" evidence="2">
    <location>
        <position position="151"/>
    </location>
    <ligand>
        <name>D-glucose 6-phosphate</name>
        <dbReference type="ChEBI" id="CHEBI:61548"/>
    </ligand>
</feature>
<feature type="binding site" evidence="2">
    <location>
        <position position="151"/>
    </location>
    <ligand>
        <name>NADP(+)</name>
        <dbReference type="ChEBI" id="CHEBI:58349"/>
        <label>1</label>
    </ligand>
</feature>
<feature type="binding site" evidence="2">
    <location>
        <begin position="181"/>
        <end position="185"/>
    </location>
    <ligand>
        <name>D-glucose 6-phosphate</name>
        <dbReference type="ChEBI" id="CHEBI:61548"/>
    </ligand>
</feature>
<feature type="binding site" evidence="2">
    <location>
        <position position="219"/>
    </location>
    <ligand>
        <name>D-glucose 6-phosphate</name>
        <dbReference type="ChEBI" id="CHEBI:61548"/>
    </ligand>
</feature>
<feature type="binding site" evidence="2">
    <location>
        <position position="238"/>
    </location>
    <ligand>
        <name>D-glucose 6-phosphate</name>
        <dbReference type="ChEBI" id="CHEBI:61548"/>
    </ligand>
</feature>
<feature type="binding site" evidence="2">
    <location>
        <position position="334"/>
    </location>
    <ligand>
        <name>NADP(+)</name>
        <dbReference type="ChEBI" id="CHEBI:58349"/>
        <label>2</label>
    </ligand>
</feature>
<feature type="binding site" evidence="2">
    <location>
        <position position="337"/>
    </location>
    <ligand>
        <name>D-glucose 6-phosphate</name>
        <dbReference type="ChEBI" id="CHEBI:61548"/>
    </ligand>
</feature>
<feature type="binding site" evidence="2">
    <location>
        <position position="342"/>
    </location>
    <ligand>
        <name>D-glucose 6-phosphate</name>
        <dbReference type="ChEBI" id="CHEBI:61548"/>
    </ligand>
</feature>
<feature type="binding site" evidence="2">
    <location>
        <position position="343"/>
    </location>
    <ligand>
        <name>NADP(+)</name>
        <dbReference type="ChEBI" id="CHEBI:58349"/>
        <label>2</label>
    </ligand>
</feature>
<feature type="binding site" evidence="2">
    <location>
        <position position="347"/>
    </location>
    <ligand>
        <name>NADP(+)</name>
        <dbReference type="ChEBI" id="CHEBI:58349"/>
        <label>2</label>
    </ligand>
</feature>
<feature type="binding site" evidence="2">
    <location>
        <position position="371"/>
    </location>
    <ligand>
        <name>NADP(+)</name>
        <dbReference type="ChEBI" id="CHEBI:58349"/>
        <label>2</label>
    </ligand>
</feature>
<feature type="binding site" evidence="2">
    <location>
        <position position="373"/>
    </location>
    <ligand>
        <name>D-glucose 6-phosphate</name>
        <dbReference type="ChEBI" id="CHEBI:61548"/>
    </ligand>
</feature>
<feature type="binding site" evidence="2">
    <location>
        <begin position="379"/>
        <end position="381"/>
    </location>
    <ligand>
        <name>NADP(+)</name>
        <dbReference type="ChEBI" id="CHEBI:58349"/>
        <label>2</label>
    </ligand>
</feature>
<feature type="binding site" evidence="2">
    <location>
        <begin position="399"/>
        <end position="401"/>
    </location>
    <ligand>
        <name>NADP(+)</name>
        <dbReference type="ChEBI" id="CHEBI:58349"/>
        <label>2</label>
    </ligand>
</feature>
<feature type="binding site" evidence="2">
    <location>
        <position position="465"/>
    </location>
    <ligand>
        <name>NADP(+)</name>
        <dbReference type="ChEBI" id="CHEBI:58349"/>
        <label>2</label>
    </ligand>
</feature>
<feature type="binding site" evidence="2">
    <location>
        <position position="487"/>
    </location>
    <ligand>
        <name>NADP(+)</name>
        <dbReference type="ChEBI" id="CHEBI:58349"/>
        <label>2</label>
    </ligand>
</feature>
<dbReference type="EC" id="1.1.1.49" evidence="2"/>
<dbReference type="EMBL" id="AAFI02000009">
    <property type="protein sequence ID" value="EAL70783.1"/>
    <property type="molecule type" value="Genomic_DNA"/>
</dbReference>
<dbReference type="EMBL" id="AAFI02000011">
    <property type="protein sequence ID" value="EAL70510.1"/>
    <property type="molecule type" value="Genomic_DNA"/>
</dbReference>
<dbReference type="RefSeq" id="XP_644436.1">
    <property type="nucleotide sequence ID" value="XM_639344.1"/>
</dbReference>
<dbReference type="RefSeq" id="XP_644814.1">
    <property type="nucleotide sequence ID" value="XM_639722.1"/>
</dbReference>
<dbReference type="SMR" id="Q557D2"/>
<dbReference type="FunCoup" id="Q557D2">
    <property type="interactions" value="535"/>
</dbReference>
<dbReference type="STRING" id="44689.Q557D2"/>
<dbReference type="PaxDb" id="44689-DDB0231285"/>
<dbReference type="EnsemblProtists" id="EAL70510">
    <property type="protein sequence ID" value="EAL70510"/>
    <property type="gene ID" value="DDB_G0273639"/>
</dbReference>
<dbReference type="EnsemblProtists" id="EAL70783">
    <property type="protein sequence ID" value="EAL70783"/>
    <property type="gene ID" value="DDB_G0273131"/>
</dbReference>
<dbReference type="GeneID" id="8618916"/>
<dbReference type="GeneID" id="8619061"/>
<dbReference type="KEGG" id="ddi:DDB_G0273131"/>
<dbReference type="KEGG" id="ddi:DDB_G0273639"/>
<dbReference type="dictyBase" id="DDB_G0273131">
    <property type="gene designation" value="g6pd-1"/>
</dbReference>
<dbReference type="dictyBase" id="DDB_G0273639">
    <property type="gene designation" value="g6pd-2"/>
</dbReference>
<dbReference type="VEuPathDB" id="AmoebaDB:DDB_G0273639"/>
<dbReference type="eggNOG" id="KOG0563">
    <property type="taxonomic scope" value="Eukaryota"/>
</dbReference>
<dbReference type="HOGENOM" id="CLU_013524_2_3_1"/>
<dbReference type="InParanoid" id="Q557D2"/>
<dbReference type="OMA" id="PDEGIQM"/>
<dbReference type="PhylomeDB" id="Q557D2"/>
<dbReference type="Reactome" id="R-DDI-5628897">
    <property type="pathway name" value="TP53 Regulates Metabolic Genes"/>
</dbReference>
<dbReference type="Reactome" id="R-DDI-71336">
    <property type="pathway name" value="Pentose phosphate pathway"/>
</dbReference>
<dbReference type="UniPathway" id="UPA00115">
    <property type="reaction ID" value="UER00408"/>
</dbReference>
<dbReference type="PRO" id="PR:Q557D2"/>
<dbReference type="Proteomes" id="UP000002195">
    <property type="component" value="Chromosome 2"/>
</dbReference>
<dbReference type="GO" id="GO:0005829">
    <property type="term" value="C:cytosol"/>
    <property type="evidence" value="ECO:0000318"/>
    <property type="project" value="GO_Central"/>
</dbReference>
<dbReference type="GO" id="GO:0045335">
    <property type="term" value="C:phagocytic vesicle"/>
    <property type="evidence" value="ECO:0007005"/>
    <property type="project" value="dictyBase"/>
</dbReference>
<dbReference type="GO" id="GO:0004345">
    <property type="term" value="F:glucose-6-phosphate dehydrogenase activity"/>
    <property type="evidence" value="ECO:0000318"/>
    <property type="project" value="GO_Central"/>
</dbReference>
<dbReference type="GO" id="GO:0050661">
    <property type="term" value="F:NADP binding"/>
    <property type="evidence" value="ECO:0007669"/>
    <property type="project" value="InterPro"/>
</dbReference>
<dbReference type="GO" id="GO:0006006">
    <property type="term" value="P:glucose metabolic process"/>
    <property type="evidence" value="ECO:0000318"/>
    <property type="project" value="GO_Central"/>
</dbReference>
<dbReference type="GO" id="GO:0009051">
    <property type="term" value="P:pentose-phosphate shunt, oxidative branch"/>
    <property type="evidence" value="ECO:0000318"/>
    <property type="project" value="GO_Central"/>
</dbReference>
<dbReference type="FunFam" id="3.30.360.10:FF:000018">
    <property type="entry name" value="Glucose-6-phosphate 1-dehydrogenase"/>
    <property type="match status" value="1"/>
</dbReference>
<dbReference type="Gene3D" id="3.30.360.10">
    <property type="entry name" value="Dihydrodipicolinate Reductase, domain 2"/>
    <property type="match status" value="1"/>
</dbReference>
<dbReference type="Gene3D" id="3.40.50.720">
    <property type="entry name" value="NAD(P)-binding Rossmann-like Domain"/>
    <property type="match status" value="1"/>
</dbReference>
<dbReference type="HAMAP" id="MF_00966">
    <property type="entry name" value="G6PD"/>
    <property type="match status" value="1"/>
</dbReference>
<dbReference type="InterPro" id="IPR001282">
    <property type="entry name" value="G6P_DH"/>
</dbReference>
<dbReference type="InterPro" id="IPR019796">
    <property type="entry name" value="G6P_DH_AS"/>
</dbReference>
<dbReference type="InterPro" id="IPR022675">
    <property type="entry name" value="G6P_DH_C"/>
</dbReference>
<dbReference type="InterPro" id="IPR022674">
    <property type="entry name" value="G6P_DH_NAD-bd"/>
</dbReference>
<dbReference type="InterPro" id="IPR036291">
    <property type="entry name" value="NAD(P)-bd_dom_sf"/>
</dbReference>
<dbReference type="NCBIfam" id="TIGR00871">
    <property type="entry name" value="zwf"/>
    <property type="match status" value="1"/>
</dbReference>
<dbReference type="PANTHER" id="PTHR23429:SF0">
    <property type="entry name" value="GLUCOSE-6-PHOSPHATE 1-DEHYDROGENASE"/>
    <property type="match status" value="1"/>
</dbReference>
<dbReference type="PANTHER" id="PTHR23429">
    <property type="entry name" value="GLUCOSE-6-PHOSPHATE 1-DEHYDROGENASE G6PD"/>
    <property type="match status" value="1"/>
</dbReference>
<dbReference type="Pfam" id="PF02781">
    <property type="entry name" value="G6PD_C"/>
    <property type="match status" value="1"/>
</dbReference>
<dbReference type="Pfam" id="PF00479">
    <property type="entry name" value="G6PD_N"/>
    <property type="match status" value="1"/>
</dbReference>
<dbReference type="PIRSF" id="PIRSF000110">
    <property type="entry name" value="G6PD"/>
    <property type="match status" value="1"/>
</dbReference>
<dbReference type="PRINTS" id="PR00079">
    <property type="entry name" value="G6PDHDRGNASE"/>
</dbReference>
<dbReference type="SUPFAM" id="SSF55347">
    <property type="entry name" value="Glyceraldehyde-3-phosphate dehydrogenase-like, C-terminal domain"/>
    <property type="match status" value="1"/>
</dbReference>
<dbReference type="SUPFAM" id="SSF51735">
    <property type="entry name" value="NAD(P)-binding Rossmann-fold domains"/>
    <property type="match status" value="1"/>
</dbReference>
<dbReference type="PROSITE" id="PS00069">
    <property type="entry name" value="G6P_DEHYDROGENASE"/>
    <property type="match status" value="1"/>
</dbReference>
<protein>
    <recommendedName>
        <fullName>Glucose-6-phosphate 1-dehydrogenase</fullName>
        <shortName>G6PD</shortName>
        <ecNumber evidence="2">1.1.1.49</ecNumber>
    </recommendedName>
</protein>
<gene>
    <name type="primary">g6pd-1</name>
    <name type="synonym">zwf</name>
    <name type="ORF">DDB_G0273131</name>
</gene>
<gene>
    <name type="primary">g6pd-2</name>
    <name type="synonym">zwf</name>
    <name type="ORF">DDB_G0273639</name>
</gene>
<evidence type="ECO:0000250" key="1">
    <source>
        <dbReference type="UniProtKB" id="P11411"/>
    </source>
</evidence>
<evidence type="ECO:0000250" key="2">
    <source>
        <dbReference type="UniProtKB" id="P11413"/>
    </source>
</evidence>
<evidence type="ECO:0000305" key="3"/>
<comment type="function">
    <text evidence="2">Cytosolic glucose-6-phosphate dehydrogenase that catalyzes the first and rate-limiting step of the oxidative branch within the pentose phosphate pathway/shunt, an alternative route to glycolysis for the dissimilation of carbohydrates and a major source of reducing power and metabolic intermediates for fatty acid and nucleic acid biosynthetic processes.</text>
</comment>
<comment type="catalytic activity">
    <reaction evidence="2">
        <text>D-glucose 6-phosphate + NADP(+) = 6-phospho-D-glucono-1,5-lactone + NADPH + H(+)</text>
        <dbReference type="Rhea" id="RHEA:15841"/>
        <dbReference type="ChEBI" id="CHEBI:15378"/>
        <dbReference type="ChEBI" id="CHEBI:57783"/>
        <dbReference type="ChEBI" id="CHEBI:57955"/>
        <dbReference type="ChEBI" id="CHEBI:58349"/>
        <dbReference type="ChEBI" id="CHEBI:61548"/>
        <dbReference type="EC" id="1.1.1.49"/>
    </reaction>
    <physiologicalReaction direction="left-to-right" evidence="2">
        <dbReference type="Rhea" id="RHEA:15842"/>
    </physiologicalReaction>
</comment>
<comment type="pathway">
    <text evidence="2">Carbohydrate degradation; pentose phosphate pathway; D-ribulose 5-phosphate from D-glucose 6-phosphate (oxidative stage): step 1/3.</text>
</comment>
<comment type="subcellular location">
    <subcellularLocation>
        <location evidence="2">Cytoplasm</location>
        <location evidence="2">Cytosol</location>
    </subcellularLocation>
</comment>
<comment type="similarity">
    <text evidence="3">Belongs to the glucose-6-phosphate dehydrogenase family.</text>
</comment>
<comment type="caution">
    <text evidence="3">The gene for this protein is duplicated in strains AX3 and AX4. These strains contain a duplication of a segment of 750 kb of chromosome 2 compared to the corresponding sequence in strain AX2.</text>
</comment>
<reference key="1">
    <citation type="journal article" date="2002" name="Nature">
        <title>Sequence and analysis of chromosome 2 of Dictyostelium discoideum.</title>
        <authorList>
            <person name="Gloeckner G."/>
            <person name="Eichinger L."/>
            <person name="Szafranski K."/>
            <person name="Pachebat J.A."/>
            <person name="Bankier A.T."/>
            <person name="Dear P.H."/>
            <person name="Lehmann R."/>
            <person name="Baumgart C."/>
            <person name="Parra G."/>
            <person name="Abril J.F."/>
            <person name="Guigo R."/>
            <person name="Kumpf K."/>
            <person name="Tunggal B."/>
            <person name="Cox E.C."/>
            <person name="Quail M.A."/>
            <person name="Platzer M."/>
            <person name="Rosenthal A."/>
            <person name="Noegel A.A."/>
        </authorList>
    </citation>
    <scope>NUCLEOTIDE SEQUENCE [LARGE SCALE GENOMIC DNA]</scope>
    <source>
        <strain>AX4</strain>
    </source>
</reference>
<reference key="2">
    <citation type="journal article" date="2005" name="Nature">
        <title>The genome of the social amoeba Dictyostelium discoideum.</title>
        <authorList>
            <person name="Eichinger L."/>
            <person name="Pachebat J.A."/>
            <person name="Gloeckner G."/>
            <person name="Rajandream M.A."/>
            <person name="Sucgang R."/>
            <person name="Berriman M."/>
            <person name="Song J."/>
            <person name="Olsen R."/>
            <person name="Szafranski K."/>
            <person name="Xu Q."/>
            <person name="Tunggal B."/>
            <person name="Kummerfeld S."/>
            <person name="Madera M."/>
            <person name="Konfortov B.A."/>
            <person name="Rivero F."/>
            <person name="Bankier A.T."/>
            <person name="Lehmann R."/>
            <person name="Hamlin N."/>
            <person name="Davies R."/>
            <person name="Gaudet P."/>
            <person name="Fey P."/>
            <person name="Pilcher K."/>
            <person name="Chen G."/>
            <person name="Saunders D."/>
            <person name="Sodergren E.J."/>
            <person name="Davis P."/>
            <person name="Kerhornou A."/>
            <person name="Nie X."/>
            <person name="Hall N."/>
            <person name="Anjard C."/>
            <person name="Hemphill L."/>
            <person name="Bason N."/>
            <person name="Farbrother P."/>
            <person name="Desany B."/>
            <person name="Just E."/>
            <person name="Morio T."/>
            <person name="Rost R."/>
            <person name="Churcher C.M."/>
            <person name="Cooper J."/>
            <person name="Haydock S."/>
            <person name="van Driessche N."/>
            <person name="Cronin A."/>
            <person name="Goodhead I."/>
            <person name="Muzny D.M."/>
            <person name="Mourier T."/>
            <person name="Pain A."/>
            <person name="Lu M."/>
            <person name="Harper D."/>
            <person name="Lindsay R."/>
            <person name="Hauser H."/>
            <person name="James K.D."/>
            <person name="Quiles M."/>
            <person name="Madan Babu M."/>
            <person name="Saito T."/>
            <person name="Buchrieser C."/>
            <person name="Wardroper A."/>
            <person name="Felder M."/>
            <person name="Thangavelu M."/>
            <person name="Johnson D."/>
            <person name="Knights A."/>
            <person name="Loulseged H."/>
            <person name="Mungall K.L."/>
            <person name="Oliver K."/>
            <person name="Price C."/>
            <person name="Quail M.A."/>
            <person name="Urushihara H."/>
            <person name="Hernandez J."/>
            <person name="Rabbinowitsch E."/>
            <person name="Steffen D."/>
            <person name="Sanders M."/>
            <person name="Ma J."/>
            <person name="Kohara Y."/>
            <person name="Sharp S."/>
            <person name="Simmonds M.N."/>
            <person name="Spiegler S."/>
            <person name="Tivey A."/>
            <person name="Sugano S."/>
            <person name="White B."/>
            <person name="Walker D."/>
            <person name="Woodward J.R."/>
            <person name="Winckler T."/>
            <person name="Tanaka Y."/>
            <person name="Shaulsky G."/>
            <person name="Schleicher M."/>
            <person name="Weinstock G.M."/>
            <person name="Rosenthal A."/>
            <person name="Cox E.C."/>
            <person name="Chisholm R.L."/>
            <person name="Gibbs R.A."/>
            <person name="Loomis W.F."/>
            <person name="Platzer M."/>
            <person name="Kay R.R."/>
            <person name="Williams J.G."/>
            <person name="Dear P.H."/>
            <person name="Noegel A.A."/>
            <person name="Barrell B.G."/>
            <person name="Kuspa A."/>
        </authorList>
    </citation>
    <scope>NUCLEOTIDE SEQUENCE [LARGE SCALE GENOMIC DNA]</scope>
    <source>
        <strain>AX4</strain>
    </source>
</reference>
<name>G6PD_DICDI</name>
<sequence>MTSTPDSRSVLTVIILGASGDLAKKKTYPALFGLYLRDLLPSNTIIYGYARSHIEIGDFKARISKGLKGDEEKKKQFLNLLHYHSGKYDEKASYDEFEKLILAEEKKQQGVDKFNRLFYMAIPPSIFIEVSIGIHGSLISKNGWSRVIVEKPFGRDLASSRELVSELGKLFKEKDLFRIDHYLGKEMVQNLMVLRFANAVFEPLWSKSHISSITITFKEDIGTEGRGGYFDQFGIIRDVMQNHLLQVLSLVAMEPPVSLNADDITNEKVKLLRCIQPIKMSEVVLGQYTSDPEGKIPAYLDDEGVPKDSTTPTYAAAVFHINNPRWRGMPFILKCGKALDERKTEVRIQFKRPDNFLFSDDDISRNELVMRIQPGEAVYLKLLSKKPGLENKIEQTELDLSYRHRFENLDLPDAYERLILDSIKGDHNLFVRDDELDVAWQIFTPLLDQIEKEKIKPEPYSFGSRGPKSADELSKKFGFIRSLGYNWPGNSPQGSKK</sequence>
<accession>Q557D2</accession>
<accession>Q869V9</accession>
<keyword id="KW-0119">Carbohydrate metabolism</keyword>
<keyword id="KW-0963">Cytoplasm</keyword>
<keyword id="KW-0313">Glucose metabolism</keyword>
<keyword id="KW-0521">NADP</keyword>
<keyword id="KW-0560">Oxidoreductase</keyword>
<keyword id="KW-1185">Reference proteome</keyword>